<protein>
    <recommendedName>
        <fullName>Putative ankyrin repeat protein R601</fullName>
    </recommendedName>
</protein>
<organismHost>
    <name type="scientific">Acanthamoeba polyphaga</name>
    <name type="common">Amoeba</name>
    <dbReference type="NCBI Taxonomy" id="5757"/>
</organismHost>
<keyword id="KW-0040">ANK repeat</keyword>
<keyword id="KW-1185">Reference proteome</keyword>
<keyword id="KW-0677">Repeat</keyword>
<feature type="chain" id="PRO_0000067180" description="Putative ankyrin repeat protein R601">
    <location>
        <begin position="1"/>
        <end position="303"/>
    </location>
</feature>
<feature type="repeat" description="ANK 1">
    <location>
        <begin position="86"/>
        <end position="115"/>
    </location>
</feature>
<feature type="repeat" description="ANK 2">
    <location>
        <begin position="117"/>
        <end position="146"/>
    </location>
</feature>
<feature type="repeat" description="ANK 3">
    <location>
        <begin position="147"/>
        <end position="176"/>
    </location>
</feature>
<feature type="repeat" description="ANK 4">
    <location>
        <begin position="200"/>
        <end position="233"/>
    </location>
</feature>
<proteinExistence type="predicted"/>
<reference key="1">
    <citation type="journal article" date="2004" name="Science">
        <title>The 1.2-megabase genome sequence of Mimivirus.</title>
        <authorList>
            <person name="Raoult D."/>
            <person name="Audic S."/>
            <person name="Robert C."/>
            <person name="Abergel C."/>
            <person name="Renesto P."/>
            <person name="Ogata H."/>
            <person name="La Scola B."/>
            <person name="Susan M."/>
            <person name="Claverie J.-M."/>
        </authorList>
    </citation>
    <scope>NUCLEOTIDE SEQUENCE [LARGE SCALE GENOMIC DNA]</scope>
    <source>
        <strain>Rowbotham-Bradford</strain>
    </source>
</reference>
<sequence>MDQYDTTKMIQEIDEFSSKVIAFNSNVYTKITPEAEKSFKKKSVIDIDCLTTEKQIELMKLSIKHKHPKYSFIELSNKFSVDLSCDDNMFLKLAVNYNDEEVLKYLIDSGIDVTVENNFAVKLQSGIIHNNRIIDLLINNGADITVDNYFPYRYAASEQNKEALKILFSYNPNVDSTMLLASINPSEIGAPILDFLISLNADVNINNGAILRENNQYYPVVKSLLAAGADVSYLSTKHLVKIIRSHNKRIIDIYIKFGVDFSKINDIAIEEKDQEYVDTLINWGIEPRVLACLFSSKLSKYRK</sequence>
<name>YR601_MIMIV</name>
<gene>
    <name type="ordered locus">MIMI_R601</name>
</gene>
<organism>
    <name type="scientific">Acanthamoeba polyphaga mimivirus</name>
    <name type="common">APMV</name>
    <dbReference type="NCBI Taxonomy" id="212035"/>
    <lineage>
        <taxon>Viruses</taxon>
        <taxon>Varidnaviria</taxon>
        <taxon>Bamfordvirae</taxon>
        <taxon>Nucleocytoviricota</taxon>
        <taxon>Megaviricetes</taxon>
        <taxon>Imitervirales</taxon>
        <taxon>Mimiviridae</taxon>
        <taxon>Megamimivirinae</taxon>
        <taxon>Mimivirus</taxon>
        <taxon>Mimivirus bradfordmassiliense</taxon>
    </lineage>
</organism>
<dbReference type="EMBL" id="AY653733">
    <property type="protein sequence ID" value="AAV50864.1"/>
    <property type="molecule type" value="Genomic_DNA"/>
</dbReference>
<dbReference type="SMR" id="Q5UP62"/>
<dbReference type="KEGG" id="vg:9925238"/>
<dbReference type="Proteomes" id="UP000001134">
    <property type="component" value="Genome"/>
</dbReference>
<dbReference type="Gene3D" id="1.25.40.20">
    <property type="entry name" value="Ankyrin repeat-containing domain"/>
    <property type="match status" value="1"/>
</dbReference>
<dbReference type="InterPro" id="IPR002110">
    <property type="entry name" value="Ankyrin_rpt"/>
</dbReference>
<dbReference type="InterPro" id="IPR036770">
    <property type="entry name" value="Ankyrin_rpt-contain_sf"/>
</dbReference>
<dbReference type="SMART" id="SM00248">
    <property type="entry name" value="ANK"/>
    <property type="match status" value="2"/>
</dbReference>
<dbReference type="SUPFAM" id="SSF48403">
    <property type="entry name" value="Ankyrin repeat"/>
    <property type="match status" value="1"/>
</dbReference>
<dbReference type="PROSITE" id="PS50297">
    <property type="entry name" value="ANK_REP_REGION"/>
    <property type="match status" value="1"/>
</dbReference>
<dbReference type="PROSITE" id="PS50088">
    <property type="entry name" value="ANK_REPEAT"/>
    <property type="match status" value="1"/>
</dbReference>
<accession>Q5UP62</accession>